<name>Y236_MYCGE</name>
<protein>
    <recommendedName>
        <fullName>Uncharacterized protein MG236</fullName>
    </recommendedName>
</protein>
<feature type="chain" id="PRO_0000210473" description="Uncharacterized protein MG236">
    <location>
        <begin position="1"/>
        <end position="140"/>
    </location>
</feature>
<accession>P47478</accession>
<sequence length="140" mass="16520">MLTSYVKVLEQNNLRLTKPRIALLKCLIEHQDWHNLSQIKTHLDLANQPSTLASIYNNLRILAKLKLINIFVDPERFETYYCLRHAEHNHIYLFDEVKQQFFTLPLTDGQIKTLLETQNHTSKVKLNDFYIVARGEINND</sequence>
<organism>
    <name type="scientific">Mycoplasma genitalium (strain ATCC 33530 / DSM 19775 / NCTC 10195 / G37)</name>
    <name type="common">Mycoplasmoides genitalium</name>
    <dbReference type="NCBI Taxonomy" id="243273"/>
    <lineage>
        <taxon>Bacteria</taxon>
        <taxon>Bacillati</taxon>
        <taxon>Mycoplasmatota</taxon>
        <taxon>Mycoplasmoidales</taxon>
        <taxon>Mycoplasmoidaceae</taxon>
        <taxon>Mycoplasmoides</taxon>
    </lineage>
</organism>
<keyword id="KW-1185">Reference proteome</keyword>
<dbReference type="EMBL" id="L43967">
    <property type="protein sequence ID" value="AAC71457.1"/>
    <property type="molecule type" value="Genomic_DNA"/>
</dbReference>
<dbReference type="PIR" id="A64226">
    <property type="entry name" value="A64226"/>
</dbReference>
<dbReference type="RefSeq" id="WP_009885773.1">
    <property type="nucleotide sequence ID" value="NC_000908.2"/>
</dbReference>
<dbReference type="SMR" id="P47478"/>
<dbReference type="STRING" id="243273.MG_236"/>
<dbReference type="GeneID" id="88282382"/>
<dbReference type="KEGG" id="mge:MG_236"/>
<dbReference type="eggNOG" id="COG0735">
    <property type="taxonomic scope" value="Bacteria"/>
</dbReference>
<dbReference type="HOGENOM" id="CLU_1738502_0_0_14"/>
<dbReference type="InParanoid" id="P47478"/>
<dbReference type="OrthoDB" id="9930967at2"/>
<dbReference type="BioCyc" id="MGEN243273:G1GJ2-283-MONOMER"/>
<dbReference type="Proteomes" id="UP000000807">
    <property type="component" value="Chromosome"/>
</dbReference>
<dbReference type="GO" id="GO:0003700">
    <property type="term" value="F:DNA-binding transcription factor activity"/>
    <property type="evidence" value="ECO:0000318"/>
    <property type="project" value="GO_Central"/>
</dbReference>
<dbReference type="GO" id="GO:0000976">
    <property type="term" value="F:transcription cis-regulatory region binding"/>
    <property type="evidence" value="ECO:0000318"/>
    <property type="project" value="GO_Central"/>
</dbReference>
<dbReference type="GO" id="GO:0008270">
    <property type="term" value="F:zinc ion binding"/>
    <property type="evidence" value="ECO:0000318"/>
    <property type="project" value="GO_Central"/>
</dbReference>
<dbReference type="GO" id="GO:0045892">
    <property type="term" value="P:negative regulation of DNA-templated transcription"/>
    <property type="evidence" value="ECO:0000318"/>
    <property type="project" value="GO_Central"/>
</dbReference>
<dbReference type="GO" id="GO:1900376">
    <property type="term" value="P:regulation of secondary metabolite biosynthetic process"/>
    <property type="evidence" value="ECO:0000318"/>
    <property type="project" value="GO_Central"/>
</dbReference>
<dbReference type="Gene3D" id="1.10.10.10">
    <property type="entry name" value="Winged helix-like DNA-binding domain superfamily/Winged helix DNA-binding domain"/>
    <property type="match status" value="1"/>
</dbReference>
<dbReference type="InterPro" id="IPR002481">
    <property type="entry name" value="FUR"/>
</dbReference>
<dbReference type="InterPro" id="IPR036388">
    <property type="entry name" value="WH-like_DNA-bd_sf"/>
</dbReference>
<dbReference type="InterPro" id="IPR036390">
    <property type="entry name" value="WH_DNA-bd_sf"/>
</dbReference>
<dbReference type="PANTHER" id="PTHR33202:SF8">
    <property type="entry name" value="PEROXIDE-RESPONSIVE REPRESSOR PERR"/>
    <property type="match status" value="1"/>
</dbReference>
<dbReference type="PANTHER" id="PTHR33202">
    <property type="entry name" value="ZINC UPTAKE REGULATION PROTEIN"/>
    <property type="match status" value="1"/>
</dbReference>
<dbReference type="Pfam" id="PF01475">
    <property type="entry name" value="FUR"/>
    <property type="match status" value="1"/>
</dbReference>
<dbReference type="SUPFAM" id="SSF46785">
    <property type="entry name" value="Winged helix' DNA-binding domain"/>
    <property type="match status" value="1"/>
</dbReference>
<proteinExistence type="predicted"/>
<gene>
    <name type="ordered locus">MG236</name>
</gene>
<reference key="1">
    <citation type="journal article" date="1995" name="Science">
        <title>The minimal gene complement of Mycoplasma genitalium.</title>
        <authorList>
            <person name="Fraser C.M."/>
            <person name="Gocayne J.D."/>
            <person name="White O."/>
            <person name="Adams M.D."/>
            <person name="Clayton R.A."/>
            <person name="Fleischmann R.D."/>
            <person name="Bult C.J."/>
            <person name="Kerlavage A.R."/>
            <person name="Sutton G.G."/>
            <person name="Kelley J.M."/>
            <person name="Fritchman J.L."/>
            <person name="Weidman J.F."/>
            <person name="Small K.V."/>
            <person name="Sandusky M."/>
            <person name="Fuhrmann J.L."/>
            <person name="Nguyen D.T."/>
            <person name="Utterback T.R."/>
            <person name="Saudek D.M."/>
            <person name="Phillips C.A."/>
            <person name="Merrick J.M."/>
            <person name="Tomb J.-F."/>
            <person name="Dougherty B.A."/>
            <person name="Bott K.F."/>
            <person name="Hu P.-C."/>
            <person name="Lucier T.S."/>
            <person name="Peterson S.N."/>
            <person name="Smith H.O."/>
            <person name="Hutchison C.A. III"/>
            <person name="Venter J.C."/>
        </authorList>
    </citation>
    <scope>NUCLEOTIDE SEQUENCE [LARGE SCALE GENOMIC DNA]</scope>
    <source>
        <strain>ATCC 33530 / DSM 19775 / NCTC 10195 / G37</strain>
    </source>
</reference>